<proteinExistence type="inferred from homology"/>
<protein>
    <recommendedName>
        <fullName evidence="1">Soluble pyridine nucleotide transhydrogenase</fullName>
        <shortName evidence="1">STH</shortName>
        <ecNumber evidence="1">1.6.1.1</ecNumber>
    </recommendedName>
    <alternativeName>
        <fullName evidence="1">NAD(P)(+) transhydrogenase [B-specific]</fullName>
    </alternativeName>
</protein>
<keyword id="KW-0963">Cytoplasm</keyword>
<keyword id="KW-0274">FAD</keyword>
<keyword id="KW-0285">Flavoprotein</keyword>
<keyword id="KW-0520">NAD</keyword>
<keyword id="KW-0521">NADP</keyword>
<keyword id="KW-0560">Oxidoreductase</keyword>
<accession>B7M718</accession>
<evidence type="ECO:0000255" key="1">
    <source>
        <dbReference type="HAMAP-Rule" id="MF_00247"/>
    </source>
</evidence>
<comment type="function">
    <text evidence="1">Conversion of NADPH, generated by peripheral catabolic pathways, to NADH, which can enter the respiratory chain for energy generation.</text>
</comment>
<comment type="catalytic activity">
    <reaction evidence="1">
        <text>NAD(+) + NADPH = NADH + NADP(+)</text>
        <dbReference type="Rhea" id="RHEA:11692"/>
        <dbReference type="ChEBI" id="CHEBI:57540"/>
        <dbReference type="ChEBI" id="CHEBI:57783"/>
        <dbReference type="ChEBI" id="CHEBI:57945"/>
        <dbReference type="ChEBI" id="CHEBI:58349"/>
        <dbReference type="EC" id="1.6.1.1"/>
    </reaction>
</comment>
<comment type="cofactor">
    <cofactor evidence="1">
        <name>FAD</name>
        <dbReference type="ChEBI" id="CHEBI:57692"/>
    </cofactor>
    <text evidence="1">Binds 1 FAD per subunit.</text>
</comment>
<comment type="subcellular location">
    <subcellularLocation>
        <location evidence="1">Cytoplasm</location>
    </subcellularLocation>
</comment>
<comment type="similarity">
    <text evidence="1">Belongs to the class-I pyridine nucleotide-disulfide oxidoreductase family.</text>
</comment>
<gene>
    <name evidence="1" type="primary">sthA</name>
    <name evidence="1" type="synonym">udhA</name>
    <name type="ordered locus">ECIAI1_4172</name>
</gene>
<name>STHA_ECO8A</name>
<feature type="chain" id="PRO_1000193454" description="Soluble pyridine nucleotide transhydrogenase">
    <location>
        <begin position="1"/>
        <end position="466"/>
    </location>
</feature>
<feature type="binding site" evidence="1">
    <location>
        <begin position="36"/>
        <end position="45"/>
    </location>
    <ligand>
        <name>FAD</name>
        <dbReference type="ChEBI" id="CHEBI:57692"/>
    </ligand>
</feature>
<reference key="1">
    <citation type="journal article" date="2009" name="PLoS Genet.">
        <title>Organised genome dynamics in the Escherichia coli species results in highly diverse adaptive paths.</title>
        <authorList>
            <person name="Touchon M."/>
            <person name="Hoede C."/>
            <person name="Tenaillon O."/>
            <person name="Barbe V."/>
            <person name="Baeriswyl S."/>
            <person name="Bidet P."/>
            <person name="Bingen E."/>
            <person name="Bonacorsi S."/>
            <person name="Bouchier C."/>
            <person name="Bouvet O."/>
            <person name="Calteau A."/>
            <person name="Chiapello H."/>
            <person name="Clermont O."/>
            <person name="Cruveiller S."/>
            <person name="Danchin A."/>
            <person name="Diard M."/>
            <person name="Dossat C."/>
            <person name="Karoui M.E."/>
            <person name="Frapy E."/>
            <person name="Garry L."/>
            <person name="Ghigo J.M."/>
            <person name="Gilles A.M."/>
            <person name="Johnson J."/>
            <person name="Le Bouguenec C."/>
            <person name="Lescat M."/>
            <person name="Mangenot S."/>
            <person name="Martinez-Jehanne V."/>
            <person name="Matic I."/>
            <person name="Nassif X."/>
            <person name="Oztas S."/>
            <person name="Petit M.A."/>
            <person name="Pichon C."/>
            <person name="Rouy Z."/>
            <person name="Ruf C.S."/>
            <person name="Schneider D."/>
            <person name="Tourret J."/>
            <person name="Vacherie B."/>
            <person name="Vallenet D."/>
            <person name="Medigue C."/>
            <person name="Rocha E.P.C."/>
            <person name="Denamur E."/>
        </authorList>
    </citation>
    <scope>NUCLEOTIDE SEQUENCE [LARGE SCALE GENOMIC DNA]</scope>
    <source>
        <strain>IAI1</strain>
    </source>
</reference>
<dbReference type="EC" id="1.6.1.1" evidence="1"/>
<dbReference type="EMBL" id="CU928160">
    <property type="protein sequence ID" value="CAR00943.1"/>
    <property type="molecule type" value="Genomic_DNA"/>
</dbReference>
<dbReference type="RefSeq" id="WP_001120810.1">
    <property type="nucleotide sequence ID" value="NC_011741.1"/>
</dbReference>
<dbReference type="SMR" id="B7M718"/>
<dbReference type="GeneID" id="75203206"/>
<dbReference type="KEGG" id="ecr:ECIAI1_4172"/>
<dbReference type="HOGENOM" id="CLU_016755_0_0_6"/>
<dbReference type="GO" id="GO:0005829">
    <property type="term" value="C:cytosol"/>
    <property type="evidence" value="ECO:0007669"/>
    <property type="project" value="TreeGrafter"/>
</dbReference>
<dbReference type="GO" id="GO:0004148">
    <property type="term" value="F:dihydrolipoyl dehydrogenase (NADH) activity"/>
    <property type="evidence" value="ECO:0007669"/>
    <property type="project" value="TreeGrafter"/>
</dbReference>
<dbReference type="GO" id="GO:0050660">
    <property type="term" value="F:flavin adenine dinucleotide binding"/>
    <property type="evidence" value="ECO:0007669"/>
    <property type="project" value="TreeGrafter"/>
</dbReference>
<dbReference type="GO" id="GO:0003957">
    <property type="term" value="F:NAD(P)+ transhydrogenase (Si-specific) activity"/>
    <property type="evidence" value="ECO:0007669"/>
    <property type="project" value="UniProtKB-UniRule"/>
</dbReference>
<dbReference type="GO" id="GO:0006103">
    <property type="term" value="P:2-oxoglutarate metabolic process"/>
    <property type="evidence" value="ECO:0007669"/>
    <property type="project" value="TreeGrafter"/>
</dbReference>
<dbReference type="GO" id="GO:0006739">
    <property type="term" value="P:NADP metabolic process"/>
    <property type="evidence" value="ECO:0007669"/>
    <property type="project" value="UniProtKB-UniRule"/>
</dbReference>
<dbReference type="FunFam" id="3.30.390.30:FF:000002">
    <property type="entry name" value="Soluble pyridine nucleotide transhydrogenase"/>
    <property type="match status" value="1"/>
</dbReference>
<dbReference type="FunFam" id="3.50.50.60:FF:000008">
    <property type="entry name" value="Soluble pyridine nucleotide transhydrogenase"/>
    <property type="match status" value="1"/>
</dbReference>
<dbReference type="Gene3D" id="3.30.390.30">
    <property type="match status" value="1"/>
</dbReference>
<dbReference type="Gene3D" id="3.50.50.60">
    <property type="entry name" value="FAD/NAD(P)-binding domain"/>
    <property type="match status" value="2"/>
</dbReference>
<dbReference type="HAMAP" id="MF_00247">
    <property type="entry name" value="SthA"/>
    <property type="match status" value="1"/>
</dbReference>
<dbReference type="InterPro" id="IPR050151">
    <property type="entry name" value="Class-I_Pyr_Nuc-Dis_Oxidored"/>
</dbReference>
<dbReference type="InterPro" id="IPR036188">
    <property type="entry name" value="FAD/NAD-bd_sf"/>
</dbReference>
<dbReference type="InterPro" id="IPR023753">
    <property type="entry name" value="FAD/NAD-binding_dom"/>
</dbReference>
<dbReference type="InterPro" id="IPR016156">
    <property type="entry name" value="FAD/NAD-linked_Rdtase_dimer_sf"/>
</dbReference>
<dbReference type="InterPro" id="IPR001100">
    <property type="entry name" value="Pyr_nuc-diS_OxRdtase"/>
</dbReference>
<dbReference type="InterPro" id="IPR004099">
    <property type="entry name" value="Pyr_nucl-diS_OxRdtase_dimer"/>
</dbReference>
<dbReference type="InterPro" id="IPR022962">
    <property type="entry name" value="STH_gammaproteobact"/>
</dbReference>
<dbReference type="NCBIfam" id="NF003585">
    <property type="entry name" value="PRK05249.1"/>
    <property type="match status" value="1"/>
</dbReference>
<dbReference type="PANTHER" id="PTHR22912">
    <property type="entry name" value="DISULFIDE OXIDOREDUCTASE"/>
    <property type="match status" value="1"/>
</dbReference>
<dbReference type="PANTHER" id="PTHR22912:SF93">
    <property type="entry name" value="SOLUBLE PYRIDINE NUCLEOTIDE TRANSHYDROGENASE"/>
    <property type="match status" value="1"/>
</dbReference>
<dbReference type="Pfam" id="PF07992">
    <property type="entry name" value="Pyr_redox_2"/>
    <property type="match status" value="1"/>
</dbReference>
<dbReference type="Pfam" id="PF02852">
    <property type="entry name" value="Pyr_redox_dim"/>
    <property type="match status" value="1"/>
</dbReference>
<dbReference type="PIRSF" id="PIRSF000350">
    <property type="entry name" value="Mercury_reductase_MerA"/>
    <property type="match status" value="1"/>
</dbReference>
<dbReference type="PRINTS" id="PR00368">
    <property type="entry name" value="FADPNR"/>
</dbReference>
<dbReference type="PRINTS" id="PR00411">
    <property type="entry name" value="PNDRDTASEI"/>
</dbReference>
<dbReference type="SUPFAM" id="SSF51905">
    <property type="entry name" value="FAD/NAD(P)-binding domain"/>
    <property type="match status" value="1"/>
</dbReference>
<dbReference type="SUPFAM" id="SSF55424">
    <property type="entry name" value="FAD/NAD-linked reductases, dimerisation (C-terminal) domain"/>
    <property type="match status" value="1"/>
</dbReference>
<organism>
    <name type="scientific">Escherichia coli O8 (strain IAI1)</name>
    <dbReference type="NCBI Taxonomy" id="585034"/>
    <lineage>
        <taxon>Bacteria</taxon>
        <taxon>Pseudomonadati</taxon>
        <taxon>Pseudomonadota</taxon>
        <taxon>Gammaproteobacteria</taxon>
        <taxon>Enterobacterales</taxon>
        <taxon>Enterobacteriaceae</taxon>
        <taxon>Escherichia</taxon>
    </lineage>
</organism>
<sequence length="466" mass="51560">MPHSYDYDAIVIGSGPGGEGAAMGLVKQGARVAVIERYQNVGGGCTHWGTIPSKALRHAVSRIIEFNQNPLYSDHSRLLRSSFADILNHADNVINQQTRMRQGFYERNHCEILQGNARFVDEHTLALDCPDGSVETLTAEKFVIACGSRPYHPTDVDFTHPRIYDSDSILSMHHEPRHVLIYGAGVIGCEYASIFRGMDVKVDLINTRDRLLAFLDQEMSDSLSYHFWNSGVVIRHNEEYEKIEGCDDGVIMHLKSGKKLKADCLLYANGRTGNTDSLALQNIGLETDSRGQLKVNSMYQTAQPHVYAVGDVIGYPSLASAAYDQGRIAAQALVKGEATAHLIEDIPTGIYTIPEISSVGKTEQQLTAMKVPYEVGRAQFKHLARAQIVGMNVGTLKILFHRETKEILGIHCFGERAAEIIHIGQAIMEQKGGGNTIEYFVNTTFNYPTMAEAYRVAALNGLNRLF</sequence>